<feature type="signal peptide" evidence="2">
    <location>
        <begin position="1"/>
        <end position="17"/>
    </location>
</feature>
<feature type="propeptide" id="PRO_0000280305" evidence="1">
    <location>
        <begin position="18"/>
        <end position="59"/>
    </location>
</feature>
<feature type="chain" id="PRO_0000280306" description="Saposin A-like" evidence="1">
    <location>
        <begin position="61"/>
        <end position="144"/>
    </location>
</feature>
<feature type="propeptide" id="PRO_0000280307" evidence="1">
    <location>
        <begin position="146"/>
        <end position="180"/>
    </location>
</feature>
<feature type="chain" id="PRO_0000280308" description="Saposin B-Val-like" evidence="1">
    <location>
        <begin position="181"/>
        <end position="257"/>
    </location>
</feature>
<feature type="chain" id="PRO_0000280309" description="Saposin B-like" evidence="1">
    <location>
        <begin position="181"/>
        <end position="256"/>
    </location>
</feature>
<feature type="propeptide" id="PRO_0000280310" evidence="1">
    <location>
        <begin position="259"/>
        <end position="288"/>
    </location>
</feature>
<feature type="chain" id="PRO_0000280311" description="Saposin C-like" evidence="1">
    <location>
        <begin position="290"/>
        <end position="369"/>
    </location>
</feature>
<feature type="propeptide" id="PRO_0000280312" evidence="1">
    <location>
        <begin position="370"/>
        <end position="391"/>
    </location>
</feature>
<feature type="chain" id="PRO_0000280313" description="Saposin D-like" evidence="1">
    <location>
        <begin position="392"/>
        <end position="473"/>
    </location>
</feature>
<feature type="propeptide" id="PRO_0000280314" evidence="1">
    <location>
        <begin position="474"/>
        <end position="521"/>
    </location>
</feature>
<feature type="domain" description="Saposin A-type 1" evidence="3">
    <location>
        <begin position="19"/>
        <end position="59"/>
    </location>
</feature>
<feature type="domain" description="Saposin B-type 1" evidence="4">
    <location>
        <begin position="60"/>
        <end position="144"/>
    </location>
</feature>
<feature type="domain" description="Saposin B-type 2" evidence="4">
    <location>
        <begin position="180"/>
        <end position="258"/>
    </location>
</feature>
<feature type="domain" description="Saposin B-type 3" evidence="4">
    <location>
        <begin position="290"/>
        <end position="370"/>
    </location>
</feature>
<feature type="domain" description="Saposin B-type 4" evidence="4">
    <location>
        <begin position="392"/>
        <end position="473"/>
    </location>
</feature>
<feature type="domain" description="Saposin A-type 2" evidence="3">
    <location>
        <begin position="475"/>
        <end position="515"/>
    </location>
</feature>
<feature type="glycosylation site" description="N-linked (GlcNAc...) asparagine" evidence="4">
    <location>
        <position position="201"/>
    </location>
</feature>
<feature type="glycosylation site" description="N-linked (GlcNAc...) asparagine" evidence="4">
    <location>
        <position position="311"/>
    </location>
</feature>
<feature type="disulfide bond" evidence="4">
    <location>
        <begin position="64"/>
        <end position="140"/>
    </location>
</feature>
<feature type="disulfide bond" evidence="4">
    <location>
        <begin position="67"/>
        <end position="134"/>
    </location>
</feature>
<feature type="disulfide bond" evidence="4">
    <location>
        <begin position="95"/>
        <end position="107"/>
    </location>
</feature>
<feature type="disulfide bond" evidence="4">
    <location>
        <begin position="184"/>
        <end position="254"/>
    </location>
</feature>
<feature type="disulfide bond" evidence="4">
    <location>
        <begin position="187"/>
        <end position="248"/>
    </location>
</feature>
<feature type="disulfide bond" evidence="4">
    <location>
        <begin position="213"/>
        <end position="224"/>
    </location>
</feature>
<feature type="disulfide bond" evidence="4">
    <location>
        <begin position="294"/>
        <end position="366"/>
    </location>
</feature>
<feature type="disulfide bond" evidence="4">
    <location>
        <begin position="297"/>
        <end position="360"/>
    </location>
</feature>
<feature type="disulfide bond" evidence="4">
    <location>
        <begin position="325"/>
        <end position="336"/>
    </location>
</feature>
<feature type="disulfide bond" evidence="4">
    <location>
        <begin position="396"/>
        <end position="469"/>
    </location>
</feature>
<feature type="disulfide bond" evidence="4">
    <location>
        <begin position="399"/>
        <end position="463"/>
    </location>
</feature>
<feature type="disulfide bond" evidence="4">
    <location>
        <begin position="427"/>
        <end position="438"/>
    </location>
</feature>
<feature type="sequence variant" id="VAR_061780" description="In dbSNP:rs11548325.">
    <original>A</original>
    <variation>S</variation>
    <location>
        <position position="41"/>
    </location>
</feature>
<feature type="sequence variant" id="VAR_061781" description="In dbSNP:rs58482081.">
    <original>G</original>
    <variation>R</variation>
    <location>
        <position position="44"/>
    </location>
</feature>
<feature type="sequence variant" id="VAR_061782" description="In dbSNP:rs56737582.">
    <original>A</original>
    <variation>T</variation>
    <location>
        <position position="59"/>
    </location>
</feature>
<feature type="sequence variant" id="VAR_051895" description="In dbSNP:rs3796905.">
    <original>A</original>
    <variation>S</variation>
    <location>
        <position position="268"/>
    </location>
</feature>
<feature type="sequence variant" id="VAR_051896" description="In dbSNP:rs6850206.">
    <original>V</original>
    <variation>M</variation>
    <location>
        <position position="296"/>
    </location>
</feature>
<accession>Q6NUJ1</accession>
<accession>A0A184</accession>
<accession>Q8N7T4</accession>
<comment type="function">
    <text evidence="1">May activate the lysosomal degradation of sphingolipids.</text>
</comment>
<comment type="subcellular location">
    <subcellularLocation>
        <location evidence="5">Secreted</location>
    </subcellularLocation>
</comment>
<comment type="sequence caution" evidence="5">
    <conflict type="erroneous initiation">
        <sequence resource="EMBL-CDS" id="AAH68579"/>
    </conflict>
</comment>
<comment type="sequence caution" evidence="5">
    <conflict type="erroneous termination">
        <sequence resource="EMBL-CDS" id="BAC05143"/>
    </conflict>
    <text>Truncated C-terminus.</text>
</comment>
<gene>
    <name type="primary">PSAPL1</name>
</gene>
<protein>
    <recommendedName>
        <fullName>Proactivator polypeptide-like 1</fullName>
    </recommendedName>
    <component>
        <recommendedName>
            <fullName>Saposin A-like</fullName>
        </recommendedName>
    </component>
    <component>
        <recommendedName>
            <fullName>Saposin B-Val-like</fullName>
        </recommendedName>
    </component>
    <component>
        <recommendedName>
            <fullName>Saposin B-like</fullName>
        </recommendedName>
    </component>
    <component>
        <recommendedName>
            <fullName>Saposin C-like</fullName>
        </recommendedName>
    </component>
    <component>
        <recommendedName>
            <fullName>Saposin D-like</fullName>
        </recommendedName>
    </component>
</protein>
<name>SAPL1_HUMAN</name>
<proteinExistence type="evidence at protein level"/>
<reference key="1">
    <citation type="submission" date="2006-09" db="EMBL/GenBank/DDBJ databases">
        <title>Large scale analysis of gene expression in the course of epidermal differentiation.</title>
        <authorList>
            <person name="Toulza E."/>
            <person name="Guerrin M."/>
        </authorList>
    </citation>
    <scope>NUCLEOTIDE SEQUENCE [MRNA]</scope>
    <source>
        <tissue>Epidermis</tissue>
    </source>
</reference>
<reference key="2">
    <citation type="journal article" date="2004" name="Genome Res.">
        <title>The status, quality, and expansion of the NIH full-length cDNA project: the Mammalian Gene Collection (MGC).</title>
        <authorList>
            <consortium name="The MGC Project Team"/>
        </authorList>
    </citation>
    <scope>NUCLEOTIDE SEQUENCE [LARGE SCALE MRNA]</scope>
    <source>
        <tissue>Brain</tissue>
    </source>
</reference>
<reference key="3">
    <citation type="journal article" date="2004" name="Nat. Genet.">
        <title>Complete sequencing and characterization of 21,243 full-length human cDNAs.</title>
        <authorList>
            <person name="Ota T."/>
            <person name="Suzuki Y."/>
            <person name="Nishikawa T."/>
            <person name="Otsuki T."/>
            <person name="Sugiyama T."/>
            <person name="Irie R."/>
            <person name="Wakamatsu A."/>
            <person name="Hayashi K."/>
            <person name="Sato H."/>
            <person name="Nagai K."/>
            <person name="Kimura K."/>
            <person name="Makita H."/>
            <person name="Sekine M."/>
            <person name="Obayashi M."/>
            <person name="Nishi T."/>
            <person name="Shibahara T."/>
            <person name="Tanaka T."/>
            <person name="Ishii S."/>
            <person name="Yamamoto J."/>
            <person name="Saito K."/>
            <person name="Kawai Y."/>
            <person name="Isono Y."/>
            <person name="Nakamura Y."/>
            <person name="Nagahari K."/>
            <person name="Murakami K."/>
            <person name="Yasuda T."/>
            <person name="Iwayanagi T."/>
            <person name="Wagatsuma M."/>
            <person name="Shiratori A."/>
            <person name="Sudo H."/>
            <person name="Hosoiri T."/>
            <person name="Kaku Y."/>
            <person name="Kodaira H."/>
            <person name="Kondo H."/>
            <person name="Sugawara M."/>
            <person name="Takahashi M."/>
            <person name="Kanda K."/>
            <person name="Yokoi T."/>
            <person name="Furuya T."/>
            <person name="Kikkawa E."/>
            <person name="Omura Y."/>
            <person name="Abe K."/>
            <person name="Kamihara K."/>
            <person name="Katsuta N."/>
            <person name="Sato K."/>
            <person name="Tanikawa M."/>
            <person name="Yamazaki M."/>
            <person name="Ninomiya K."/>
            <person name="Ishibashi T."/>
            <person name="Yamashita H."/>
            <person name="Murakawa K."/>
            <person name="Fujimori K."/>
            <person name="Tanai H."/>
            <person name="Kimata M."/>
            <person name="Watanabe M."/>
            <person name="Hiraoka S."/>
            <person name="Chiba Y."/>
            <person name="Ishida S."/>
            <person name="Ono Y."/>
            <person name="Takiguchi S."/>
            <person name="Watanabe S."/>
            <person name="Yosida M."/>
            <person name="Hotuta T."/>
            <person name="Kusano J."/>
            <person name="Kanehori K."/>
            <person name="Takahashi-Fujii A."/>
            <person name="Hara H."/>
            <person name="Tanase T.-O."/>
            <person name="Nomura Y."/>
            <person name="Togiya S."/>
            <person name="Komai F."/>
            <person name="Hara R."/>
            <person name="Takeuchi K."/>
            <person name="Arita M."/>
            <person name="Imose N."/>
            <person name="Musashino K."/>
            <person name="Yuuki H."/>
            <person name="Oshima A."/>
            <person name="Sasaki N."/>
            <person name="Aotsuka S."/>
            <person name="Yoshikawa Y."/>
            <person name="Matsunawa H."/>
            <person name="Ichihara T."/>
            <person name="Shiohata N."/>
            <person name="Sano S."/>
            <person name="Moriya S."/>
            <person name="Momiyama H."/>
            <person name="Satoh N."/>
            <person name="Takami S."/>
            <person name="Terashima Y."/>
            <person name="Suzuki O."/>
            <person name="Nakagawa S."/>
            <person name="Senoh A."/>
            <person name="Mizoguchi H."/>
            <person name="Goto Y."/>
            <person name="Shimizu F."/>
            <person name="Wakebe H."/>
            <person name="Hishigaki H."/>
            <person name="Watanabe T."/>
            <person name="Sugiyama A."/>
            <person name="Takemoto M."/>
            <person name="Kawakami B."/>
            <person name="Yamazaki M."/>
            <person name="Watanabe K."/>
            <person name="Kumagai A."/>
            <person name="Itakura S."/>
            <person name="Fukuzumi Y."/>
            <person name="Fujimori Y."/>
            <person name="Komiyama M."/>
            <person name="Tashiro H."/>
            <person name="Tanigami A."/>
            <person name="Fujiwara T."/>
            <person name="Ono T."/>
            <person name="Yamada K."/>
            <person name="Fujii Y."/>
            <person name="Ozaki K."/>
            <person name="Hirao M."/>
            <person name="Ohmori Y."/>
            <person name="Kawabata A."/>
            <person name="Hikiji T."/>
            <person name="Kobatake N."/>
            <person name="Inagaki H."/>
            <person name="Ikema Y."/>
            <person name="Okamoto S."/>
            <person name="Okitani R."/>
            <person name="Kawakami T."/>
            <person name="Noguchi S."/>
            <person name="Itoh T."/>
            <person name="Shigeta K."/>
            <person name="Senba T."/>
            <person name="Matsumura K."/>
            <person name="Nakajima Y."/>
            <person name="Mizuno T."/>
            <person name="Morinaga M."/>
            <person name="Sasaki M."/>
            <person name="Togashi T."/>
            <person name="Oyama M."/>
            <person name="Hata H."/>
            <person name="Watanabe M."/>
            <person name="Komatsu T."/>
            <person name="Mizushima-Sugano J."/>
            <person name="Satoh T."/>
            <person name="Shirai Y."/>
            <person name="Takahashi Y."/>
            <person name="Nakagawa K."/>
            <person name="Okumura K."/>
            <person name="Nagase T."/>
            <person name="Nomura N."/>
            <person name="Kikuchi H."/>
            <person name="Masuho Y."/>
            <person name="Yamashita R."/>
            <person name="Nakai K."/>
            <person name="Yada T."/>
            <person name="Nakamura Y."/>
            <person name="Ohara O."/>
            <person name="Isogai T."/>
            <person name="Sugano S."/>
        </authorList>
    </citation>
    <scope>NUCLEOTIDE SEQUENCE [LARGE SCALE MRNA] OF 209-521</scope>
    <source>
        <tissue>Testis</tissue>
    </source>
</reference>
<sequence length="521" mass="56627">MLCALLLLPSLLGATRASPTSGPQECAKGSTVWCQDLQTAARCGAVGYCQGAVWNKPTAKSLPCDVCQDIAAAAGNGLNPDATESDILALVMKTCEWLPSQESSAGCKWMVDAHSSAILSMLRGAPDSAPAQVCTALSLCEPLQRHLATLRPLSKEDTFEAVAPFMANGPLTFHPRQAPEGALCQDCVRQVSRLQEAVRSNLTLADLNIQEQCESLGPGLAVLCKNYLFQFFVPADQALRLLPPQELCRKGGFCEELGAPARLTQVVAMDGVPSLELGLPRKQSEMQMKAGVTCEVCMNVVQKLDHWLMSNSSELMITHALERVCSVMPASITKECIILVDTYSPSLVQLVAKITPEKVCKFIRLCGNRRRARAVHDAYAIVPSPEWDAENQGSFCNGCKRLLTVSSHNLESKSTKRDILVAFKGGCSILPLPYMIQCKHFVTQYEPVLIESLKDMMDPVAVCKKVGACHGPRTPLLGTDQCALGPSFWCRSQEAAKLCNAVQHCQKHVWKEMHLHAGEHA</sequence>
<evidence type="ECO:0000250" key="1"/>
<evidence type="ECO:0000255" key="2"/>
<evidence type="ECO:0000255" key="3">
    <source>
        <dbReference type="PROSITE-ProRule" id="PRU00414"/>
    </source>
</evidence>
<evidence type="ECO:0000255" key="4">
    <source>
        <dbReference type="PROSITE-ProRule" id="PRU00415"/>
    </source>
</evidence>
<evidence type="ECO:0000305" key="5"/>
<dbReference type="EMBL" id="DQ991252">
    <property type="protein sequence ID" value="ABJ55983.1"/>
    <property type="molecule type" value="mRNA"/>
</dbReference>
<dbReference type="EMBL" id="BC068579">
    <property type="protein sequence ID" value="AAH68579.1"/>
    <property type="status" value="ALT_INIT"/>
    <property type="molecule type" value="mRNA"/>
</dbReference>
<dbReference type="EMBL" id="AK097698">
    <property type="protein sequence ID" value="BAC05143.1"/>
    <property type="status" value="ALT_SEQ"/>
    <property type="molecule type" value="mRNA"/>
</dbReference>
<dbReference type="CCDS" id="CCDS47009.1"/>
<dbReference type="RefSeq" id="NP_001078851.1">
    <property type="nucleotide sequence ID" value="NM_001085382.2"/>
</dbReference>
<dbReference type="SMR" id="Q6NUJ1"/>
<dbReference type="BioGRID" id="612854">
    <property type="interactions" value="14"/>
</dbReference>
<dbReference type="FunCoup" id="Q6NUJ1">
    <property type="interactions" value="279"/>
</dbReference>
<dbReference type="IntAct" id="Q6NUJ1">
    <property type="interactions" value="4"/>
</dbReference>
<dbReference type="STRING" id="9606.ENSP00000317445"/>
<dbReference type="GlyCosmos" id="Q6NUJ1">
    <property type="glycosylation" value="2 sites, No reported glycans"/>
</dbReference>
<dbReference type="GlyGen" id="Q6NUJ1">
    <property type="glycosylation" value="2 sites"/>
</dbReference>
<dbReference type="iPTMnet" id="Q6NUJ1"/>
<dbReference type="PhosphoSitePlus" id="Q6NUJ1"/>
<dbReference type="BioMuta" id="PSAPL1"/>
<dbReference type="DMDM" id="134035030"/>
<dbReference type="jPOST" id="Q6NUJ1"/>
<dbReference type="MassIVE" id="Q6NUJ1"/>
<dbReference type="PaxDb" id="9606-ENSP00000317445"/>
<dbReference type="PeptideAtlas" id="Q6NUJ1"/>
<dbReference type="ProteomicsDB" id="66682"/>
<dbReference type="Pumba" id="Q6NUJ1"/>
<dbReference type="Antibodypedia" id="43373">
    <property type="antibodies" value="88 antibodies from 20 providers"/>
</dbReference>
<dbReference type="DNASU" id="768239"/>
<dbReference type="Ensembl" id="ENST00000319098.7">
    <property type="protein sequence ID" value="ENSP00000317445.4"/>
    <property type="gene ID" value="ENSG00000178597.7"/>
</dbReference>
<dbReference type="GeneID" id="768239"/>
<dbReference type="KEGG" id="hsa:768239"/>
<dbReference type="MANE-Select" id="ENST00000319098.7">
    <property type="protein sequence ID" value="ENSP00000317445.4"/>
    <property type="RefSeq nucleotide sequence ID" value="NM_001085382.2"/>
    <property type="RefSeq protein sequence ID" value="NP_001078851.1"/>
</dbReference>
<dbReference type="UCSC" id="uc011bwj.3">
    <property type="organism name" value="human"/>
</dbReference>
<dbReference type="AGR" id="HGNC:33131"/>
<dbReference type="CTD" id="768239"/>
<dbReference type="DisGeNET" id="768239"/>
<dbReference type="GeneCards" id="PSAPL1"/>
<dbReference type="HGNC" id="HGNC:33131">
    <property type="gene designation" value="PSAPL1"/>
</dbReference>
<dbReference type="HPA" id="ENSG00000178597">
    <property type="expression patterns" value="Group enriched (skin, stomach)"/>
</dbReference>
<dbReference type="neXtProt" id="NX_Q6NUJ1"/>
<dbReference type="OpenTargets" id="ENSG00000178597"/>
<dbReference type="PharmGKB" id="PA162400215"/>
<dbReference type="VEuPathDB" id="HostDB:ENSG00000178597"/>
<dbReference type="eggNOG" id="KOG1340">
    <property type="taxonomic scope" value="Eukaryota"/>
</dbReference>
<dbReference type="GeneTree" id="ENSGT00940000164031"/>
<dbReference type="HOGENOM" id="CLU_033757_0_0_1"/>
<dbReference type="InParanoid" id="Q6NUJ1"/>
<dbReference type="OMA" id="CKWMVDA"/>
<dbReference type="OrthoDB" id="69496at2759"/>
<dbReference type="PAN-GO" id="Q6NUJ1">
    <property type="GO annotations" value="5 GO annotations based on evolutionary models"/>
</dbReference>
<dbReference type="PhylomeDB" id="Q6NUJ1"/>
<dbReference type="TreeFam" id="TF316942"/>
<dbReference type="PathwayCommons" id="Q6NUJ1"/>
<dbReference type="BioGRID-ORCS" id="768239">
    <property type="hits" value="13 hits in 1139 CRISPR screens"/>
</dbReference>
<dbReference type="GenomeRNAi" id="768239"/>
<dbReference type="Pharos" id="Q6NUJ1">
    <property type="development level" value="Tdark"/>
</dbReference>
<dbReference type="PRO" id="PR:Q6NUJ1"/>
<dbReference type="Proteomes" id="UP000005640">
    <property type="component" value="Chromosome 4"/>
</dbReference>
<dbReference type="RNAct" id="Q6NUJ1">
    <property type="molecule type" value="protein"/>
</dbReference>
<dbReference type="Bgee" id="ENSG00000178597">
    <property type="expression patterns" value="Expressed in upper leg skin and 60 other cell types or tissues"/>
</dbReference>
<dbReference type="GO" id="GO:0005829">
    <property type="term" value="C:cytosol"/>
    <property type="evidence" value="ECO:0000314"/>
    <property type="project" value="HPA"/>
</dbReference>
<dbReference type="GO" id="GO:0005615">
    <property type="term" value="C:extracellular space"/>
    <property type="evidence" value="ECO:0000318"/>
    <property type="project" value="GO_Central"/>
</dbReference>
<dbReference type="GO" id="GO:0005764">
    <property type="term" value="C:lysosome"/>
    <property type="evidence" value="ECO:0007669"/>
    <property type="project" value="InterPro"/>
</dbReference>
<dbReference type="GO" id="GO:0016020">
    <property type="term" value="C:membrane"/>
    <property type="evidence" value="ECO:0007669"/>
    <property type="project" value="GOC"/>
</dbReference>
<dbReference type="GO" id="GO:0007193">
    <property type="term" value="P:adenylate cyclase-inhibiting G protein-coupled receptor signaling pathway"/>
    <property type="evidence" value="ECO:0000318"/>
    <property type="project" value="GO_Central"/>
</dbReference>
<dbReference type="GO" id="GO:0060742">
    <property type="term" value="P:epithelial cell differentiation involved in prostate gland development"/>
    <property type="evidence" value="ECO:0000318"/>
    <property type="project" value="GO_Central"/>
</dbReference>
<dbReference type="GO" id="GO:0060736">
    <property type="term" value="P:prostate gland growth"/>
    <property type="evidence" value="ECO:0000318"/>
    <property type="project" value="GO_Central"/>
</dbReference>
<dbReference type="GO" id="GO:0019216">
    <property type="term" value="P:regulation of lipid metabolic process"/>
    <property type="evidence" value="ECO:0000318"/>
    <property type="project" value="GO_Central"/>
</dbReference>
<dbReference type="GO" id="GO:0006665">
    <property type="term" value="P:sphingolipid metabolic process"/>
    <property type="evidence" value="ECO:0007669"/>
    <property type="project" value="UniProtKB-KW"/>
</dbReference>
<dbReference type="FunFam" id="1.10.225.10:FF:000014">
    <property type="entry name" value="Proactivator polypeptide-like 1"/>
    <property type="match status" value="1"/>
</dbReference>
<dbReference type="FunFam" id="1.10.225.10:FF:000002">
    <property type="entry name" value="prosaposin isoform X2"/>
    <property type="match status" value="3"/>
</dbReference>
<dbReference type="Gene3D" id="1.10.225.10">
    <property type="entry name" value="Saposin-like"/>
    <property type="match status" value="4"/>
</dbReference>
<dbReference type="InterPro" id="IPR003119">
    <property type="entry name" value="SAP_A"/>
</dbReference>
<dbReference type="InterPro" id="IPR007856">
    <property type="entry name" value="SapB_1"/>
</dbReference>
<dbReference type="InterPro" id="IPR008138">
    <property type="entry name" value="SapB_2"/>
</dbReference>
<dbReference type="InterPro" id="IPR008373">
    <property type="entry name" value="Saposin"/>
</dbReference>
<dbReference type="InterPro" id="IPR011001">
    <property type="entry name" value="Saposin-like"/>
</dbReference>
<dbReference type="InterPro" id="IPR021165">
    <property type="entry name" value="Saposin_chordata"/>
</dbReference>
<dbReference type="InterPro" id="IPR008139">
    <property type="entry name" value="SaposinB_dom"/>
</dbReference>
<dbReference type="InterPro" id="IPR051428">
    <property type="entry name" value="Sphingo_Act-Surfact_Prot"/>
</dbReference>
<dbReference type="PANTHER" id="PTHR11480:SF39">
    <property type="entry name" value="PROACTIVATOR POLYPEPTIDE-LIKE 1"/>
    <property type="match status" value="1"/>
</dbReference>
<dbReference type="PANTHER" id="PTHR11480">
    <property type="entry name" value="SAPOSIN-RELATED"/>
    <property type="match status" value="1"/>
</dbReference>
<dbReference type="Pfam" id="PF02199">
    <property type="entry name" value="SapA"/>
    <property type="match status" value="2"/>
</dbReference>
<dbReference type="Pfam" id="PF05184">
    <property type="entry name" value="SapB_1"/>
    <property type="match status" value="2"/>
</dbReference>
<dbReference type="Pfam" id="PF03489">
    <property type="entry name" value="SapB_2"/>
    <property type="match status" value="2"/>
</dbReference>
<dbReference type="PIRSF" id="PIRSF002431">
    <property type="entry name" value="Saposin"/>
    <property type="match status" value="1"/>
</dbReference>
<dbReference type="PRINTS" id="PR01797">
    <property type="entry name" value="SAPOSIN"/>
</dbReference>
<dbReference type="SMART" id="SM00162">
    <property type="entry name" value="SAPA"/>
    <property type="match status" value="2"/>
</dbReference>
<dbReference type="SMART" id="SM00741">
    <property type="entry name" value="SapB"/>
    <property type="match status" value="4"/>
</dbReference>
<dbReference type="SUPFAM" id="SSF47862">
    <property type="entry name" value="Saposin"/>
    <property type="match status" value="4"/>
</dbReference>
<dbReference type="PROSITE" id="PS51110">
    <property type="entry name" value="SAP_A"/>
    <property type="match status" value="2"/>
</dbReference>
<dbReference type="PROSITE" id="PS50015">
    <property type="entry name" value="SAP_B"/>
    <property type="match status" value="4"/>
</dbReference>
<organism>
    <name type="scientific">Homo sapiens</name>
    <name type="common">Human</name>
    <dbReference type="NCBI Taxonomy" id="9606"/>
    <lineage>
        <taxon>Eukaryota</taxon>
        <taxon>Metazoa</taxon>
        <taxon>Chordata</taxon>
        <taxon>Craniata</taxon>
        <taxon>Vertebrata</taxon>
        <taxon>Euteleostomi</taxon>
        <taxon>Mammalia</taxon>
        <taxon>Eutheria</taxon>
        <taxon>Euarchontoglires</taxon>
        <taxon>Primates</taxon>
        <taxon>Haplorrhini</taxon>
        <taxon>Catarrhini</taxon>
        <taxon>Hominidae</taxon>
        <taxon>Homo</taxon>
    </lineage>
</organism>
<keyword id="KW-1015">Disulfide bond</keyword>
<keyword id="KW-0325">Glycoprotein</keyword>
<keyword id="KW-0443">Lipid metabolism</keyword>
<keyword id="KW-1267">Proteomics identification</keyword>
<keyword id="KW-1185">Reference proteome</keyword>
<keyword id="KW-0677">Repeat</keyword>
<keyword id="KW-0964">Secreted</keyword>
<keyword id="KW-0732">Signal</keyword>
<keyword id="KW-0746">Sphingolipid metabolism</keyword>